<proteinExistence type="inferred from homology"/>
<feature type="chain" id="PRO_1000021462" description="Ribonuclease P protein component">
    <location>
        <begin position="1"/>
        <end position="118"/>
    </location>
</feature>
<reference key="1">
    <citation type="submission" date="2006-08" db="EMBL/GenBank/DDBJ databases">
        <title>Complete sequence of Shewanella sp. MR-4.</title>
        <authorList>
            <consortium name="US DOE Joint Genome Institute"/>
            <person name="Copeland A."/>
            <person name="Lucas S."/>
            <person name="Lapidus A."/>
            <person name="Barry K."/>
            <person name="Detter J.C."/>
            <person name="Glavina del Rio T."/>
            <person name="Hammon N."/>
            <person name="Israni S."/>
            <person name="Dalin E."/>
            <person name="Tice H."/>
            <person name="Pitluck S."/>
            <person name="Kiss H."/>
            <person name="Brettin T."/>
            <person name="Bruce D."/>
            <person name="Han C."/>
            <person name="Tapia R."/>
            <person name="Gilna P."/>
            <person name="Schmutz J."/>
            <person name="Larimer F."/>
            <person name="Land M."/>
            <person name="Hauser L."/>
            <person name="Kyrpides N."/>
            <person name="Mikhailova N."/>
            <person name="Nealson K."/>
            <person name="Konstantinidis K."/>
            <person name="Klappenbach J."/>
            <person name="Tiedje J."/>
            <person name="Richardson P."/>
        </authorList>
    </citation>
    <scope>NUCLEOTIDE SEQUENCE [LARGE SCALE GENOMIC DNA]</scope>
    <source>
        <strain>MR-4</strain>
    </source>
</reference>
<dbReference type="EC" id="3.1.26.5" evidence="1"/>
<dbReference type="EMBL" id="CP000446">
    <property type="protein sequence ID" value="ABI41005.1"/>
    <property type="molecule type" value="Genomic_DNA"/>
</dbReference>
<dbReference type="RefSeq" id="WP_007652336.1">
    <property type="nucleotide sequence ID" value="NC_008321.1"/>
</dbReference>
<dbReference type="SMR" id="Q0HD62"/>
<dbReference type="GeneID" id="94725975"/>
<dbReference type="KEGG" id="she:Shewmr4_3942"/>
<dbReference type="HOGENOM" id="CLU_117179_11_0_6"/>
<dbReference type="GO" id="GO:0030677">
    <property type="term" value="C:ribonuclease P complex"/>
    <property type="evidence" value="ECO:0007669"/>
    <property type="project" value="TreeGrafter"/>
</dbReference>
<dbReference type="GO" id="GO:0042781">
    <property type="term" value="F:3'-tRNA processing endoribonuclease activity"/>
    <property type="evidence" value="ECO:0007669"/>
    <property type="project" value="TreeGrafter"/>
</dbReference>
<dbReference type="GO" id="GO:0004526">
    <property type="term" value="F:ribonuclease P activity"/>
    <property type="evidence" value="ECO:0007669"/>
    <property type="project" value="UniProtKB-UniRule"/>
</dbReference>
<dbReference type="GO" id="GO:0000049">
    <property type="term" value="F:tRNA binding"/>
    <property type="evidence" value="ECO:0007669"/>
    <property type="project" value="UniProtKB-UniRule"/>
</dbReference>
<dbReference type="GO" id="GO:0001682">
    <property type="term" value="P:tRNA 5'-leader removal"/>
    <property type="evidence" value="ECO:0007669"/>
    <property type="project" value="UniProtKB-UniRule"/>
</dbReference>
<dbReference type="FunFam" id="3.30.230.10:FF:000016">
    <property type="entry name" value="Ribonuclease P protein component"/>
    <property type="match status" value="1"/>
</dbReference>
<dbReference type="Gene3D" id="3.30.230.10">
    <property type="match status" value="1"/>
</dbReference>
<dbReference type="HAMAP" id="MF_00227">
    <property type="entry name" value="RNase_P"/>
    <property type="match status" value="1"/>
</dbReference>
<dbReference type="InterPro" id="IPR020568">
    <property type="entry name" value="Ribosomal_Su5_D2-typ_SF"/>
</dbReference>
<dbReference type="InterPro" id="IPR014721">
    <property type="entry name" value="Ribsml_uS5_D2-typ_fold_subgr"/>
</dbReference>
<dbReference type="InterPro" id="IPR000100">
    <property type="entry name" value="RNase_P"/>
</dbReference>
<dbReference type="InterPro" id="IPR020539">
    <property type="entry name" value="RNase_P_CS"/>
</dbReference>
<dbReference type="NCBIfam" id="TIGR00188">
    <property type="entry name" value="rnpA"/>
    <property type="match status" value="1"/>
</dbReference>
<dbReference type="PANTHER" id="PTHR33992">
    <property type="entry name" value="RIBONUCLEASE P PROTEIN COMPONENT"/>
    <property type="match status" value="1"/>
</dbReference>
<dbReference type="PANTHER" id="PTHR33992:SF1">
    <property type="entry name" value="RIBONUCLEASE P PROTEIN COMPONENT"/>
    <property type="match status" value="1"/>
</dbReference>
<dbReference type="Pfam" id="PF00825">
    <property type="entry name" value="Ribonuclease_P"/>
    <property type="match status" value="1"/>
</dbReference>
<dbReference type="SUPFAM" id="SSF54211">
    <property type="entry name" value="Ribosomal protein S5 domain 2-like"/>
    <property type="match status" value="1"/>
</dbReference>
<dbReference type="PROSITE" id="PS00648">
    <property type="entry name" value="RIBONUCLEASE_P"/>
    <property type="match status" value="1"/>
</dbReference>
<gene>
    <name evidence="1" type="primary">rnpA</name>
    <name type="ordered locus">Shewmr4_3942</name>
</gene>
<evidence type="ECO:0000255" key="1">
    <source>
        <dbReference type="HAMAP-Rule" id="MF_00227"/>
    </source>
</evidence>
<accession>Q0HD62</accession>
<organism>
    <name type="scientific">Shewanella sp. (strain MR-4)</name>
    <dbReference type="NCBI Taxonomy" id="60480"/>
    <lineage>
        <taxon>Bacteria</taxon>
        <taxon>Pseudomonadati</taxon>
        <taxon>Pseudomonadota</taxon>
        <taxon>Gammaproteobacteria</taxon>
        <taxon>Alteromonadales</taxon>
        <taxon>Shewanellaceae</taxon>
        <taxon>Shewanella</taxon>
    </lineage>
</organism>
<sequence>MTSYTFTRELRLLTPAQFKSVFSNPIKASSAEITLLAIPNSEQHPRLGLTVAKRYVKRANQRNRIKRVIRDSFRLNQHDIPHLDIVVLVRNGVMEMENAEINKLIEKLWRKLSRRYNG</sequence>
<comment type="function">
    <text evidence="1">RNaseP catalyzes the removal of the 5'-leader sequence from pre-tRNA to produce the mature 5'-terminus. It can also cleave other RNA substrates such as 4.5S RNA. The protein component plays an auxiliary but essential role in vivo by binding to the 5'-leader sequence and broadening the substrate specificity of the ribozyme.</text>
</comment>
<comment type="catalytic activity">
    <reaction evidence="1">
        <text>Endonucleolytic cleavage of RNA, removing 5'-extranucleotides from tRNA precursor.</text>
        <dbReference type="EC" id="3.1.26.5"/>
    </reaction>
</comment>
<comment type="subunit">
    <text evidence="1">Consists of a catalytic RNA component (M1 or rnpB) and a protein subunit.</text>
</comment>
<comment type="similarity">
    <text evidence="1">Belongs to the RnpA family.</text>
</comment>
<name>RNPA_SHESM</name>
<protein>
    <recommendedName>
        <fullName evidence="1">Ribonuclease P protein component</fullName>
        <shortName evidence="1">RNase P protein</shortName>
        <shortName evidence="1">RNaseP protein</shortName>
        <ecNumber evidence="1">3.1.26.5</ecNumber>
    </recommendedName>
    <alternativeName>
        <fullName evidence="1">Protein C5</fullName>
    </alternativeName>
</protein>
<keyword id="KW-0255">Endonuclease</keyword>
<keyword id="KW-0378">Hydrolase</keyword>
<keyword id="KW-0540">Nuclease</keyword>
<keyword id="KW-0694">RNA-binding</keyword>
<keyword id="KW-0819">tRNA processing</keyword>